<protein>
    <recommendedName>
        <fullName evidence="1">Photosystem II protein D1</fullName>
        <shortName evidence="1">PSII D1 protein</shortName>
        <ecNumber evidence="1">1.10.3.9</ecNumber>
    </recommendedName>
    <alternativeName>
        <fullName evidence="1">Photosystem II Q(B) protein</fullName>
    </alternativeName>
</protein>
<proteinExistence type="inferred from homology"/>
<evidence type="ECO:0000255" key="1">
    <source>
        <dbReference type="HAMAP-Rule" id="MF_01379"/>
    </source>
</evidence>
<gene>
    <name evidence="1" type="primary">psbA</name>
</gene>
<sequence length="353" mass="38889">MTVILERRESESLWGRFCNWITSTENRLYIGWFGVLMIPTLLTATSVFIIAFIAAPPVDIDGIREPVSGSLLYGNNIISGAIIPTSAAIGLHFYPIWEAASVDEWLYNGGPYELIVLHFLLGVACYMGREWELSFRLGMRPWIAVAYSAPVAAAAAVFLIYPIGQGSFSDGMPLGISGTFNFMIVFQAEHNILMHPFHMLGVAGVFGGSLFSAMHGSLVTSSLIRETTENESANAGYRFGQEEETYNIVAAHGYFGRLIFQYASFNNSRSLHFFLAAWPVVGIWFTALGISTMAFNLNGFNFNQSVVDSQGRVINTWADIINRANLGMEVMHERNAHNFPLDLAAVEAPSING</sequence>
<feature type="initiator methionine" description="Removed" evidence="1">
    <location>
        <position position="1"/>
    </location>
</feature>
<feature type="chain" id="PRO_0000340075" description="Photosystem II protein D1" evidence="1">
    <location>
        <begin position="2"/>
        <end position="344"/>
    </location>
</feature>
<feature type="propeptide" id="PRO_0000340076" evidence="1">
    <location>
        <begin position="345"/>
        <end position="353"/>
    </location>
</feature>
<feature type="transmembrane region" description="Helical" evidence="1">
    <location>
        <begin position="29"/>
        <end position="46"/>
    </location>
</feature>
<feature type="transmembrane region" description="Helical" evidence="1">
    <location>
        <begin position="118"/>
        <end position="133"/>
    </location>
</feature>
<feature type="transmembrane region" description="Helical" evidence="1">
    <location>
        <begin position="142"/>
        <end position="156"/>
    </location>
</feature>
<feature type="transmembrane region" description="Helical" evidence="1">
    <location>
        <begin position="197"/>
        <end position="218"/>
    </location>
</feature>
<feature type="transmembrane region" description="Helical" evidence="1">
    <location>
        <begin position="274"/>
        <end position="288"/>
    </location>
</feature>
<feature type="binding site" description="axial binding residue" evidence="1">
    <location>
        <position position="118"/>
    </location>
    <ligand>
        <name>chlorophyll a</name>
        <dbReference type="ChEBI" id="CHEBI:58416"/>
        <label>ChlzD1</label>
    </ligand>
    <ligandPart>
        <name>Mg</name>
        <dbReference type="ChEBI" id="CHEBI:25107"/>
    </ligandPart>
</feature>
<feature type="binding site" evidence="1">
    <location>
        <position position="126"/>
    </location>
    <ligand>
        <name>pheophytin a</name>
        <dbReference type="ChEBI" id="CHEBI:136840"/>
        <label>D1</label>
    </ligand>
</feature>
<feature type="binding site" evidence="1">
    <location>
        <position position="170"/>
    </location>
    <ligand>
        <name>[CaMn4O5] cluster</name>
        <dbReference type="ChEBI" id="CHEBI:189552"/>
    </ligand>
</feature>
<feature type="binding site" evidence="1">
    <location>
        <position position="189"/>
    </location>
    <ligand>
        <name>[CaMn4O5] cluster</name>
        <dbReference type="ChEBI" id="CHEBI:189552"/>
    </ligand>
</feature>
<feature type="binding site" description="axial binding residue" evidence="1">
    <location>
        <position position="198"/>
    </location>
    <ligand>
        <name>chlorophyll a</name>
        <dbReference type="ChEBI" id="CHEBI:58416"/>
        <label>PD1</label>
    </ligand>
    <ligandPart>
        <name>Mg</name>
        <dbReference type="ChEBI" id="CHEBI:25107"/>
    </ligandPart>
</feature>
<feature type="binding site" evidence="1">
    <location>
        <position position="215"/>
    </location>
    <ligand>
        <name>a quinone</name>
        <dbReference type="ChEBI" id="CHEBI:132124"/>
        <label>B</label>
    </ligand>
</feature>
<feature type="binding site" evidence="1">
    <location>
        <position position="215"/>
    </location>
    <ligand>
        <name>Fe cation</name>
        <dbReference type="ChEBI" id="CHEBI:24875"/>
        <note>ligand shared with heterodimeric partner</note>
    </ligand>
</feature>
<feature type="binding site" evidence="1">
    <location>
        <begin position="264"/>
        <end position="265"/>
    </location>
    <ligand>
        <name>a quinone</name>
        <dbReference type="ChEBI" id="CHEBI:132124"/>
        <label>B</label>
    </ligand>
</feature>
<feature type="binding site" evidence="1">
    <location>
        <position position="272"/>
    </location>
    <ligand>
        <name>Fe cation</name>
        <dbReference type="ChEBI" id="CHEBI:24875"/>
        <note>ligand shared with heterodimeric partner</note>
    </ligand>
</feature>
<feature type="binding site" evidence="1">
    <location>
        <position position="332"/>
    </location>
    <ligand>
        <name>[CaMn4O5] cluster</name>
        <dbReference type="ChEBI" id="CHEBI:189552"/>
    </ligand>
</feature>
<feature type="binding site" evidence="1">
    <location>
        <position position="333"/>
    </location>
    <ligand>
        <name>[CaMn4O5] cluster</name>
        <dbReference type="ChEBI" id="CHEBI:189552"/>
    </ligand>
</feature>
<feature type="binding site" evidence="1">
    <location>
        <position position="342"/>
    </location>
    <ligand>
        <name>[CaMn4O5] cluster</name>
        <dbReference type="ChEBI" id="CHEBI:189552"/>
    </ligand>
</feature>
<feature type="binding site" evidence="1">
    <location>
        <position position="344"/>
    </location>
    <ligand>
        <name>[CaMn4O5] cluster</name>
        <dbReference type="ChEBI" id="CHEBI:189552"/>
    </ligand>
</feature>
<feature type="site" description="Tyrosine radical intermediate" evidence="1">
    <location>
        <position position="161"/>
    </location>
</feature>
<feature type="site" description="Stabilizes free radical intermediate" evidence="1">
    <location>
        <position position="190"/>
    </location>
</feature>
<feature type="site" description="Cleavage; by CTPA" evidence="1">
    <location>
        <begin position="344"/>
        <end position="345"/>
    </location>
</feature>
<feature type="modified residue" description="N-acetylthreonine" evidence="1">
    <location>
        <position position="2"/>
    </location>
</feature>
<feature type="modified residue" description="Phosphothreonine" evidence="1">
    <location>
        <position position="2"/>
    </location>
</feature>
<reference key="1">
    <citation type="journal article" date="2006" name="BMC Evol. Biol.">
        <title>Phylogenetic analyses of Vitis (Vitaceae) based on complete chloroplast genome sequences: effects of taxon sampling and phylogenetic methods on resolving relationships among rosids.</title>
        <authorList>
            <person name="Jansen R.K."/>
            <person name="Kaittanis C."/>
            <person name="Lee S.-B."/>
            <person name="Saski C."/>
            <person name="Tomkins J."/>
            <person name="Alverson A.J."/>
            <person name="Daniell H."/>
        </authorList>
    </citation>
    <scope>NUCLEOTIDE SEQUENCE [LARGE SCALE GENOMIC DNA]</scope>
    <source>
        <strain>cv. Maxxa</strain>
    </source>
</reference>
<comment type="function">
    <text evidence="1">Photosystem II (PSII) is a light-driven water:plastoquinone oxidoreductase that uses light energy to abstract electrons from H(2)O, generating O(2) and a proton gradient subsequently used for ATP formation. It consists of a core antenna complex that captures photons, and an electron transfer chain that converts photonic excitation into a charge separation. The D1/D2 (PsbA/PsbD) reaction center heterodimer binds P680, the primary electron donor of PSII as well as several subsequent electron acceptors.</text>
</comment>
<comment type="catalytic activity">
    <reaction evidence="1">
        <text>2 a plastoquinone + 4 hnu + 2 H2O = 2 a plastoquinol + O2</text>
        <dbReference type="Rhea" id="RHEA:36359"/>
        <dbReference type="Rhea" id="RHEA-COMP:9561"/>
        <dbReference type="Rhea" id="RHEA-COMP:9562"/>
        <dbReference type="ChEBI" id="CHEBI:15377"/>
        <dbReference type="ChEBI" id="CHEBI:15379"/>
        <dbReference type="ChEBI" id="CHEBI:17757"/>
        <dbReference type="ChEBI" id="CHEBI:30212"/>
        <dbReference type="ChEBI" id="CHEBI:62192"/>
        <dbReference type="EC" id="1.10.3.9"/>
    </reaction>
</comment>
<comment type="cofactor">
    <text evidence="1">The D1/D2 heterodimer binds P680, chlorophylls that are the primary electron donor of PSII, and subsequent electron acceptors. It shares a non-heme iron and each subunit binds pheophytin, quinone, additional chlorophylls, carotenoids and lipids. D1 provides most of the ligands for the Mn4-Ca-O5 cluster of the oxygen-evolving complex (OEC). There is also a Cl(-1) ion associated with D1 and D2, which is required for oxygen evolution. The PSII complex binds additional chlorophylls, carotenoids and specific lipids.</text>
</comment>
<comment type="subunit">
    <text evidence="1">PSII is composed of 1 copy each of membrane proteins PsbA, PsbB, PsbC, PsbD, PsbE, PsbF, PsbH, PsbI, PsbJ, PsbK, PsbL, PsbM, PsbT, PsbX, PsbY, PsbZ, Psb30/Ycf12, at least 3 peripheral proteins of the oxygen-evolving complex and a large number of cofactors. It forms dimeric complexes.</text>
</comment>
<comment type="subcellular location">
    <subcellularLocation>
        <location evidence="1">Plastid</location>
        <location evidence="1">Chloroplast thylakoid membrane</location>
        <topology evidence="1">Multi-pass membrane protein</topology>
    </subcellularLocation>
</comment>
<comment type="PTM">
    <text evidence="1">Tyr-161 forms a radical intermediate that is referred to as redox-active TyrZ, YZ or Y-Z.</text>
</comment>
<comment type="PTM">
    <text evidence="1">C-terminally processed by CTPA; processing is essential to allow assembly of the oxygen-evolving complex and thus photosynthetic growth.</text>
</comment>
<comment type="miscellaneous">
    <text evidence="1">2 of the reaction center chlorophylls (ChlD1 and ChlD2) are entirely coordinated by water.</text>
</comment>
<comment type="miscellaneous">
    <text evidence="1">Herbicides such as atrazine, BNT, diuron or ioxynil bind in the Q(B) binding site and block subsequent electron transfer.</text>
</comment>
<comment type="similarity">
    <text evidence="1">Belongs to the reaction center PufL/M/PsbA/D family.</text>
</comment>
<geneLocation type="chloroplast"/>
<keyword id="KW-0007">Acetylation</keyword>
<keyword id="KW-0106">Calcium</keyword>
<keyword id="KW-0148">Chlorophyll</keyword>
<keyword id="KW-0150">Chloroplast</keyword>
<keyword id="KW-0157">Chromophore</keyword>
<keyword id="KW-0249">Electron transport</keyword>
<keyword id="KW-0359">Herbicide resistance</keyword>
<keyword id="KW-0408">Iron</keyword>
<keyword id="KW-0460">Magnesium</keyword>
<keyword id="KW-0464">Manganese</keyword>
<keyword id="KW-0472">Membrane</keyword>
<keyword id="KW-0479">Metal-binding</keyword>
<keyword id="KW-0560">Oxidoreductase</keyword>
<keyword id="KW-0597">Phosphoprotein</keyword>
<keyword id="KW-0602">Photosynthesis</keyword>
<keyword id="KW-0604">Photosystem II</keyword>
<keyword id="KW-0934">Plastid</keyword>
<keyword id="KW-1185">Reference proteome</keyword>
<keyword id="KW-0793">Thylakoid</keyword>
<keyword id="KW-0812">Transmembrane</keyword>
<keyword id="KW-1133">Transmembrane helix</keyword>
<keyword id="KW-0813">Transport</keyword>
<organism>
    <name type="scientific">Vitis vinifera</name>
    <name type="common">Grape</name>
    <dbReference type="NCBI Taxonomy" id="29760"/>
    <lineage>
        <taxon>Eukaryota</taxon>
        <taxon>Viridiplantae</taxon>
        <taxon>Streptophyta</taxon>
        <taxon>Embryophyta</taxon>
        <taxon>Tracheophyta</taxon>
        <taxon>Spermatophyta</taxon>
        <taxon>Magnoliopsida</taxon>
        <taxon>eudicotyledons</taxon>
        <taxon>Gunneridae</taxon>
        <taxon>Pentapetalae</taxon>
        <taxon>rosids</taxon>
        <taxon>Vitales</taxon>
        <taxon>Vitaceae</taxon>
        <taxon>Viteae</taxon>
        <taxon>Vitis</taxon>
    </lineage>
</organism>
<accession>Q0ZJ40</accession>
<dbReference type="EC" id="1.10.3.9" evidence="1"/>
<dbReference type="EMBL" id="DQ424856">
    <property type="protein sequence ID" value="ABE47514.1"/>
    <property type="molecule type" value="Genomic_DNA"/>
</dbReference>
<dbReference type="RefSeq" id="YP_567056.1">
    <property type="nucleotide sequence ID" value="NC_007957.1"/>
</dbReference>
<dbReference type="SMR" id="Q0ZJ40"/>
<dbReference type="FunCoup" id="Q0ZJ40">
    <property type="interactions" value="233"/>
</dbReference>
<dbReference type="STRING" id="29760.Q0ZJ40"/>
<dbReference type="PaxDb" id="29760-VIT_13s0019g02630.t01"/>
<dbReference type="GeneID" id="4025118"/>
<dbReference type="KEGG" id="vvi:4025118"/>
<dbReference type="eggNOG" id="ENOG502QR09">
    <property type="taxonomic scope" value="Eukaryota"/>
</dbReference>
<dbReference type="InParanoid" id="Q0ZJ40"/>
<dbReference type="OrthoDB" id="143at2759"/>
<dbReference type="Proteomes" id="UP000009183">
    <property type="component" value="Chloroplast"/>
</dbReference>
<dbReference type="ExpressionAtlas" id="Q0ZJ40">
    <property type="expression patterns" value="baseline and differential"/>
</dbReference>
<dbReference type="GO" id="GO:0009535">
    <property type="term" value="C:chloroplast thylakoid membrane"/>
    <property type="evidence" value="ECO:0007669"/>
    <property type="project" value="UniProtKB-SubCell"/>
</dbReference>
<dbReference type="GO" id="GO:0009523">
    <property type="term" value="C:photosystem II"/>
    <property type="evidence" value="ECO:0000318"/>
    <property type="project" value="GO_Central"/>
</dbReference>
<dbReference type="GO" id="GO:0016168">
    <property type="term" value="F:chlorophyll binding"/>
    <property type="evidence" value="ECO:0007669"/>
    <property type="project" value="UniProtKB-UniRule"/>
</dbReference>
<dbReference type="GO" id="GO:0045156">
    <property type="term" value="F:electron transporter, transferring electrons within the cyclic electron transport pathway of photosynthesis activity"/>
    <property type="evidence" value="ECO:0007669"/>
    <property type="project" value="InterPro"/>
</dbReference>
<dbReference type="GO" id="GO:0005506">
    <property type="term" value="F:iron ion binding"/>
    <property type="evidence" value="ECO:0007669"/>
    <property type="project" value="UniProtKB-UniRule"/>
</dbReference>
<dbReference type="GO" id="GO:0016682">
    <property type="term" value="F:oxidoreductase activity, acting on diphenols and related substances as donors, oxygen as acceptor"/>
    <property type="evidence" value="ECO:0007669"/>
    <property type="project" value="UniProtKB-UniRule"/>
</dbReference>
<dbReference type="GO" id="GO:0010242">
    <property type="term" value="F:oxygen evolving activity"/>
    <property type="evidence" value="ECO:0007669"/>
    <property type="project" value="UniProtKB-EC"/>
</dbReference>
<dbReference type="GO" id="GO:0009772">
    <property type="term" value="P:photosynthetic electron transport in photosystem II"/>
    <property type="evidence" value="ECO:0007669"/>
    <property type="project" value="InterPro"/>
</dbReference>
<dbReference type="GO" id="GO:0009635">
    <property type="term" value="P:response to herbicide"/>
    <property type="evidence" value="ECO:0007669"/>
    <property type="project" value="UniProtKB-KW"/>
</dbReference>
<dbReference type="CDD" id="cd09289">
    <property type="entry name" value="Photosystem-II_D1"/>
    <property type="match status" value="1"/>
</dbReference>
<dbReference type="FunFam" id="1.20.85.10:FF:000002">
    <property type="entry name" value="Photosystem II protein D1"/>
    <property type="match status" value="1"/>
</dbReference>
<dbReference type="Gene3D" id="1.20.85.10">
    <property type="entry name" value="Photosystem II protein D1-like"/>
    <property type="match status" value="1"/>
</dbReference>
<dbReference type="HAMAP" id="MF_01379">
    <property type="entry name" value="PSII_PsbA_D1"/>
    <property type="match status" value="1"/>
</dbReference>
<dbReference type="InterPro" id="IPR055266">
    <property type="entry name" value="D1/D2"/>
</dbReference>
<dbReference type="InterPro" id="IPR036854">
    <property type="entry name" value="Photo_II_D1/D2_sf"/>
</dbReference>
<dbReference type="InterPro" id="IPR000484">
    <property type="entry name" value="Photo_RC_L/M"/>
</dbReference>
<dbReference type="InterPro" id="IPR055265">
    <property type="entry name" value="Photo_RC_L/M_CS"/>
</dbReference>
<dbReference type="InterPro" id="IPR005867">
    <property type="entry name" value="PSII_D1"/>
</dbReference>
<dbReference type="NCBIfam" id="TIGR01151">
    <property type="entry name" value="psbA"/>
    <property type="match status" value="1"/>
</dbReference>
<dbReference type="PANTHER" id="PTHR33149">
    <property type="entry name" value="PHOTOSYSTEM II PROTEIN D1"/>
    <property type="match status" value="1"/>
</dbReference>
<dbReference type="PANTHER" id="PTHR33149:SF55">
    <property type="entry name" value="PHOTOSYSTEM II PROTEIN D1"/>
    <property type="match status" value="1"/>
</dbReference>
<dbReference type="Pfam" id="PF00124">
    <property type="entry name" value="Photo_RC"/>
    <property type="match status" value="1"/>
</dbReference>
<dbReference type="PRINTS" id="PR00256">
    <property type="entry name" value="REACTNCENTRE"/>
</dbReference>
<dbReference type="SUPFAM" id="SSF81483">
    <property type="entry name" value="Bacterial photosystem II reaction centre, L and M subunits"/>
    <property type="match status" value="1"/>
</dbReference>
<dbReference type="PROSITE" id="PS00244">
    <property type="entry name" value="REACTION_CENTER"/>
    <property type="match status" value="1"/>
</dbReference>
<name>PSBA_VITVI</name>